<gene>
    <name evidence="1" type="primary">cobQ</name>
    <name type="ordered locus">CHY_0769</name>
</gene>
<organism>
    <name type="scientific">Carboxydothermus hydrogenoformans (strain ATCC BAA-161 / DSM 6008 / Z-2901)</name>
    <dbReference type="NCBI Taxonomy" id="246194"/>
    <lineage>
        <taxon>Bacteria</taxon>
        <taxon>Bacillati</taxon>
        <taxon>Bacillota</taxon>
        <taxon>Clostridia</taxon>
        <taxon>Thermoanaerobacterales</taxon>
        <taxon>Thermoanaerobacteraceae</taxon>
        <taxon>Carboxydothermus</taxon>
    </lineage>
</organism>
<sequence>MARAIMFQGTASHVGKSVLTLALARVLYLDGFKVAPFKAQNMALNSYVTLDGGEMGRAQVAQAEACGLEPRVEMNPVLLKPSSDKGSQVIVLGKPIGHYSAKSYHLERRSMVWEAVKKAYETLAQEFDFIVIEGAGSPAEVNLKASDIANMKTAFLANAPVILVADIDRGGALASLVGTMELLEPEERKMVCGFILNKFRGDLELLKPALTFLEEKTGIPVLGVMPYIPELLIPEEDSVSLEETVSNREKDLKIGVVWYPRISNFTDFEIFQYEPDVELIYIKTLQDFRDDFDLVILPGSKNTVADLNYLKQRGLDQKLYAYVEKGKPLIGICGGLQILGEKILDPDLVEGKETEVKALGILDTVTEFRGDKITRRTSTRVTRADGYFFLQREEISGYEIHHGRTFLSGERSDVLDNTENPLVFARGRVLGTYLHGLFDNDFFRHRLLNRLRREKGLDGIENRPTSLKNLRQENYDKIARVFRENVNLKKIYEILGI</sequence>
<accession>Q3AE11</accession>
<evidence type="ECO:0000255" key="1">
    <source>
        <dbReference type="HAMAP-Rule" id="MF_00028"/>
    </source>
</evidence>
<keyword id="KW-0169">Cobalamin biosynthesis</keyword>
<keyword id="KW-0315">Glutamine amidotransferase</keyword>
<keyword id="KW-1185">Reference proteome</keyword>
<reference key="1">
    <citation type="journal article" date="2005" name="PLoS Genet.">
        <title>Life in hot carbon monoxide: the complete genome sequence of Carboxydothermus hydrogenoformans Z-2901.</title>
        <authorList>
            <person name="Wu M."/>
            <person name="Ren Q."/>
            <person name="Durkin A.S."/>
            <person name="Daugherty S.C."/>
            <person name="Brinkac L.M."/>
            <person name="Dodson R.J."/>
            <person name="Madupu R."/>
            <person name="Sullivan S.A."/>
            <person name="Kolonay J.F."/>
            <person name="Nelson W.C."/>
            <person name="Tallon L.J."/>
            <person name="Jones K.M."/>
            <person name="Ulrich L.E."/>
            <person name="Gonzalez J.M."/>
            <person name="Zhulin I.B."/>
            <person name="Robb F.T."/>
            <person name="Eisen J.A."/>
        </authorList>
    </citation>
    <scope>NUCLEOTIDE SEQUENCE [LARGE SCALE GENOMIC DNA]</scope>
    <source>
        <strain>ATCC BAA-161 / DSM 6008 / Z-2901</strain>
    </source>
</reference>
<proteinExistence type="inferred from homology"/>
<comment type="function">
    <text evidence="1">Catalyzes amidations at positions B, D, E, and G on adenosylcobyrinic A,C-diamide. NH(2) groups are provided by glutamine, and one molecule of ATP is hydrogenolyzed for each amidation.</text>
</comment>
<comment type="pathway">
    <text evidence="1">Cofactor biosynthesis; adenosylcobalamin biosynthesis.</text>
</comment>
<comment type="similarity">
    <text evidence="1">Belongs to the CobB/CobQ family. CobQ subfamily.</text>
</comment>
<dbReference type="EMBL" id="CP000141">
    <property type="protein sequence ID" value="ABB14396.1"/>
    <property type="molecule type" value="Genomic_DNA"/>
</dbReference>
<dbReference type="RefSeq" id="WP_011343699.1">
    <property type="nucleotide sequence ID" value="NC_007503.1"/>
</dbReference>
<dbReference type="SMR" id="Q3AE11"/>
<dbReference type="STRING" id="246194.CHY_0769"/>
<dbReference type="KEGG" id="chy:CHY_0769"/>
<dbReference type="eggNOG" id="COG1492">
    <property type="taxonomic scope" value="Bacteria"/>
</dbReference>
<dbReference type="HOGENOM" id="CLU_019250_2_2_9"/>
<dbReference type="InParanoid" id="Q3AE11"/>
<dbReference type="OrthoDB" id="9808302at2"/>
<dbReference type="UniPathway" id="UPA00148"/>
<dbReference type="Proteomes" id="UP000002706">
    <property type="component" value="Chromosome"/>
</dbReference>
<dbReference type="GO" id="GO:0015420">
    <property type="term" value="F:ABC-type vitamin B12 transporter activity"/>
    <property type="evidence" value="ECO:0007669"/>
    <property type="project" value="UniProtKB-UniRule"/>
</dbReference>
<dbReference type="GO" id="GO:0003824">
    <property type="term" value="F:catalytic activity"/>
    <property type="evidence" value="ECO:0007669"/>
    <property type="project" value="InterPro"/>
</dbReference>
<dbReference type="GO" id="GO:0009236">
    <property type="term" value="P:cobalamin biosynthetic process"/>
    <property type="evidence" value="ECO:0007669"/>
    <property type="project" value="UniProtKB-UniRule"/>
</dbReference>
<dbReference type="CDD" id="cd05389">
    <property type="entry name" value="CobQ_N"/>
    <property type="match status" value="1"/>
</dbReference>
<dbReference type="CDD" id="cd01750">
    <property type="entry name" value="GATase1_CobQ"/>
    <property type="match status" value="1"/>
</dbReference>
<dbReference type="Gene3D" id="3.40.50.880">
    <property type="match status" value="1"/>
</dbReference>
<dbReference type="Gene3D" id="3.40.50.300">
    <property type="entry name" value="P-loop containing nucleotide triphosphate hydrolases"/>
    <property type="match status" value="1"/>
</dbReference>
<dbReference type="HAMAP" id="MF_00028">
    <property type="entry name" value="CobQ"/>
    <property type="match status" value="1"/>
</dbReference>
<dbReference type="InterPro" id="IPR029062">
    <property type="entry name" value="Class_I_gatase-like"/>
</dbReference>
<dbReference type="InterPro" id="IPR002586">
    <property type="entry name" value="CobQ/CobB/MinD/ParA_Nub-bd_dom"/>
</dbReference>
<dbReference type="InterPro" id="IPR033949">
    <property type="entry name" value="CobQ_GATase1"/>
</dbReference>
<dbReference type="InterPro" id="IPR047045">
    <property type="entry name" value="CobQ_N"/>
</dbReference>
<dbReference type="InterPro" id="IPR004459">
    <property type="entry name" value="CobQ_synth"/>
</dbReference>
<dbReference type="InterPro" id="IPR011698">
    <property type="entry name" value="GATase_3"/>
</dbReference>
<dbReference type="InterPro" id="IPR027417">
    <property type="entry name" value="P-loop_NTPase"/>
</dbReference>
<dbReference type="NCBIfam" id="TIGR00313">
    <property type="entry name" value="cobQ"/>
    <property type="match status" value="1"/>
</dbReference>
<dbReference type="NCBIfam" id="NF001989">
    <property type="entry name" value="PRK00784.1"/>
    <property type="match status" value="1"/>
</dbReference>
<dbReference type="PANTHER" id="PTHR21343:SF1">
    <property type="entry name" value="COBYRIC ACID SYNTHASE"/>
    <property type="match status" value="1"/>
</dbReference>
<dbReference type="PANTHER" id="PTHR21343">
    <property type="entry name" value="DETHIOBIOTIN SYNTHETASE"/>
    <property type="match status" value="1"/>
</dbReference>
<dbReference type="Pfam" id="PF01656">
    <property type="entry name" value="CbiA"/>
    <property type="match status" value="1"/>
</dbReference>
<dbReference type="Pfam" id="PF07685">
    <property type="entry name" value="GATase_3"/>
    <property type="match status" value="1"/>
</dbReference>
<dbReference type="SUPFAM" id="SSF52317">
    <property type="entry name" value="Class I glutamine amidotransferase-like"/>
    <property type="match status" value="1"/>
</dbReference>
<dbReference type="SUPFAM" id="SSF52540">
    <property type="entry name" value="P-loop containing nucleoside triphosphate hydrolases"/>
    <property type="match status" value="1"/>
</dbReference>
<dbReference type="PROSITE" id="PS51274">
    <property type="entry name" value="GATASE_COBBQ"/>
    <property type="match status" value="1"/>
</dbReference>
<feature type="chain" id="PRO_1000002350" description="Cobyric acid synthase">
    <location>
        <begin position="1"/>
        <end position="497"/>
    </location>
</feature>
<feature type="domain" description="GATase cobBQ-type" evidence="1">
    <location>
        <begin position="251"/>
        <end position="443"/>
    </location>
</feature>
<feature type="active site" description="Nucleophile" evidence="1">
    <location>
        <position position="333"/>
    </location>
</feature>
<feature type="active site" evidence="1">
    <location>
        <position position="435"/>
    </location>
</feature>
<protein>
    <recommendedName>
        <fullName evidence="1">Cobyric acid synthase</fullName>
    </recommendedName>
</protein>
<name>COBQ_CARHZ</name>